<gene>
    <name type="primary">SIM1</name>
</gene>
<feature type="chain" id="PRO_0000285524" description="Single-minded homolog 1">
    <location>
        <begin position="1"/>
        <end position="766"/>
    </location>
</feature>
<feature type="domain" description="bHLH" evidence="5">
    <location>
        <begin position="1"/>
        <end position="53"/>
    </location>
</feature>
<feature type="domain" description="PAS 1" evidence="3">
    <location>
        <begin position="77"/>
        <end position="147"/>
    </location>
</feature>
<feature type="domain" description="PAS 2" evidence="3">
    <location>
        <begin position="218"/>
        <end position="288"/>
    </location>
</feature>
<feature type="domain" description="PAC">
    <location>
        <begin position="292"/>
        <end position="335"/>
    </location>
</feature>
<feature type="domain" description="Single-minded C-terminal" evidence="4">
    <location>
        <begin position="336"/>
        <end position="766"/>
    </location>
</feature>
<feature type="region of interest" description="Disordered" evidence="6">
    <location>
        <begin position="353"/>
        <end position="431"/>
    </location>
</feature>
<feature type="region of interest" description="Disordered" evidence="6">
    <location>
        <begin position="528"/>
        <end position="563"/>
    </location>
</feature>
<feature type="short sequence motif" description="Nuclear localization signal" evidence="1">
    <location>
        <begin position="368"/>
        <end position="387"/>
    </location>
</feature>
<feature type="compositionally biased region" description="Polar residues" evidence="6">
    <location>
        <begin position="353"/>
        <end position="365"/>
    </location>
</feature>
<feature type="compositionally biased region" description="Low complexity" evidence="6">
    <location>
        <begin position="373"/>
        <end position="385"/>
    </location>
</feature>
<feature type="compositionally biased region" description="Basic and acidic residues" evidence="6">
    <location>
        <begin position="394"/>
        <end position="404"/>
    </location>
</feature>
<protein>
    <recommendedName>
        <fullName>Single-minded homolog 1</fullName>
    </recommendedName>
</protein>
<proteinExistence type="inferred from homology"/>
<evidence type="ECO:0000250" key="1"/>
<evidence type="ECO:0000250" key="2">
    <source>
        <dbReference type="UniProtKB" id="Q61045"/>
    </source>
</evidence>
<evidence type="ECO:0000255" key="3">
    <source>
        <dbReference type="PROSITE-ProRule" id="PRU00140"/>
    </source>
</evidence>
<evidence type="ECO:0000255" key="4">
    <source>
        <dbReference type="PROSITE-ProRule" id="PRU00632"/>
    </source>
</evidence>
<evidence type="ECO:0000255" key="5">
    <source>
        <dbReference type="PROSITE-ProRule" id="PRU00981"/>
    </source>
</evidence>
<evidence type="ECO:0000256" key="6">
    <source>
        <dbReference type="SAM" id="MobiDB-lite"/>
    </source>
</evidence>
<dbReference type="EMBL" id="DQ977181">
    <property type="protein sequence ID" value="ABM54211.1"/>
    <property type="molecule type" value="Genomic_DNA"/>
</dbReference>
<dbReference type="SMR" id="A1YFY6"/>
<dbReference type="STRING" id="9597.ENSPPAP00000002245"/>
<dbReference type="eggNOG" id="KOG3559">
    <property type="taxonomic scope" value="Eukaryota"/>
</dbReference>
<dbReference type="Proteomes" id="UP000240080">
    <property type="component" value="Unplaced"/>
</dbReference>
<dbReference type="GO" id="GO:0005634">
    <property type="term" value="C:nucleus"/>
    <property type="evidence" value="ECO:0007669"/>
    <property type="project" value="UniProtKB-SubCell"/>
</dbReference>
<dbReference type="GO" id="GO:0000981">
    <property type="term" value="F:DNA-binding transcription factor activity, RNA polymerase II-specific"/>
    <property type="evidence" value="ECO:0007669"/>
    <property type="project" value="TreeGrafter"/>
</dbReference>
<dbReference type="GO" id="GO:0046982">
    <property type="term" value="F:protein heterodimerization activity"/>
    <property type="evidence" value="ECO:0000250"/>
    <property type="project" value="UniProtKB"/>
</dbReference>
<dbReference type="GO" id="GO:0000977">
    <property type="term" value="F:RNA polymerase II transcription regulatory region sequence-specific DNA binding"/>
    <property type="evidence" value="ECO:0007669"/>
    <property type="project" value="TreeGrafter"/>
</dbReference>
<dbReference type="GO" id="GO:0030154">
    <property type="term" value="P:cell differentiation"/>
    <property type="evidence" value="ECO:0007669"/>
    <property type="project" value="UniProtKB-KW"/>
</dbReference>
<dbReference type="GO" id="GO:0007399">
    <property type="term" value="P:nervous system development"/>
    <property type="evidence" value="ECO:0007669"/>
    <property type="project" value="UniProtKB-KW"/>
</dbReference>
<dbReference type="CDD" id="cd19738">
    <property type="entry name" value="bHLH-PAS_SIM1"/>
    <property type="match status" value="1"/>
</dbReference>
<dbReference type="CDD" id="cd00130">
    <property type="entry name" value="PAS"/>
    <property type="match status" value="2"/>
</dbReference>
<dbReference type="FunFam" id="3.30.450.20:FF:000017">
    <property type="entry name" value="SIM bHLH transcription factor 2"/>
    <property type="match status" value="1"/>
</dbReference>
<dbReference type="FunFam" id="3.30.450.20:FF:000047">
    <property type="entry name" value="SIM bHLH transcription factor 2"/>
    <property type="match status" value="1"/>
</dbReference>
<dbReference type="FunFam" id="4.10.280.10:FF:000007">
    <property type="entry name" value="single-minded homolog 1 isoform X1"/>
    <property type="match status" value="1"/>
</dbReference>
<dbReference type="Gene3D" id="4.10.280.10">
    <property type="entry name" value="Helix-loop-helix DNA-binding domain"/>
    <property type="match status" value="1"/>
</dbReference>
<dbReference type="Gene3D" id="3.30.450.20">
    <property type="entry name" value="PAS domain"/>
    <property type="match status" value="2"/>
</dbReference>
<dbReference type="InterPro" id="IPR011598">
    <property type="entry name" value="bHLH_dom"/>
</dbReference>
<dbReference type="InterPro" id="IPR036638">
    <property type="entry name" value="HLH_DNA-bd_sf"/>
</dbReference>
<dbReference type="InterPro" id="IPR001610">
    <property type="entry name" value="PAC"/>
</dbReference>
<dbReference type="InterPro" id="IPR000014">
    <property type="entry name" value="PAS"/>
</dbReference>
<dbReference type="InterPro" id="IPR035965">
    <property type="entry name" value="PAS-like_dom_sf"/>
</dbReference>
<dbReference type="InterPro" id="IPR013767">
    <property type="entry name" value="PAS_fold"/>
</dbReference>
<dbReference type="InterPro" id="IPR013655">
    <property type="entry name" value="PAS_fold_3"/>
</dbReference>
<dbReference type="InterPro" id="IPR010578">
    <property type="entry name" value="SIM_C"/>
</dbReference>
<dbReference type="PANTHER" id="PTHR23043">
    <property type="entry name" value="HYPOXIA-INDUCIBLE FACTOR 1 ALPHA"/>
    <property type="match status" value="1"/>
</dbReference>
<dbReference type="PANTHER" id="PTHR23043:SF22">
    <property type="entry name" value="SINGLE-MINDED HOMOLOG 1"/>
    <property type="match status" value="1"/>
</dbReference>
<dbReference type="Pfam" id="PF23171">
    <property type="entry name" value="bHLH_HIF1A"/>
    <property type="match status" value="1"/>
</dbReference>
<dbReference type="Pfam" id="PF00989">
    <property type="entry name" value="PAS"/>
    <property type="match status" value="1"/>
</dbReference>
<dbReference type="Pfam" id="PF08447">
    <property type="entry name" value="PAS_3"/>
    <property type="match status" value="1"/>
</dbReference>
<dbReference type="Pfam" id="PF06621">
    <property type="entry name" value="SIM_C"/>
    <property type="match status" value="1"/>
</dbReference>
<dbReference type="SMART" id="SM00353">
    <property type="entry name" value="HLH"/>
    <property type="match status" value="1"/>
</dbReference>
<dbReference type="SMART" id="SM00086">
    <property type="entry name" value="PAC"/>
    <property type="match status" value="1"/>
</dbReference>
<dbReference type="SMART" id="SM00091">
    <property type="entry name" value="PAS"/>
    <property type="match status" value="2"/>
</dbReference>
<dbReference type="SUPFAM" id="SSF47459">
    <property type="entry name" value="HLH, helix-loop-helix DNA-binding domain"/>
    <property type="match status" value="1"/>
</dbReference>
<dbReference type="SUPFAM" id="SSF55785">
    <property type="entry name" value="PYP-like sensor domain (PAS domain)"/>
    <property type="match status" value="2"/>
</dbReference>
<dbReference type="PROSITE" id="PS50888">
    <property type="entry name" value="BHLH"/>
    <property type="match status" value="1"/>
</dbReference>
<dbReference type="PROSITE" id="PS50112">
    <property type="entry name" value="PAS"/>
    <property type="match status" value="2"/>
</dbReference>
<dbReference type="PROSITE" id="PS51302">
    <property type="entry name" value="SIM_C"/>
    <property type="match status" value="1"/>
</dbReference>
<organism>
    <name type="scientific">Pan paniscus</name>
    <name type="common">Pygmy chimpanzee</name>
    <name type="synonym">Bonobo</name>
    <dbReference type="NCBI Taxonomy" id="9597"/>
    <lineage>
        <taxon>Eukaryota</taxon>
        <taxon>Metazoa</taxon>
        <taxon>Chordata</taxon>
        <taxon>Craniata</taxon>
        <taxon>Vertebrata</taxon>
        <taxon>Euteleostomi</taxon>
        <taxon>Mammalia</taxon>
        <taxon>Eutheria</taxon>
        <taxon>Euarchontoglires</taxon>
        <taxon>Primates</taxon>
        <taxon>Haplorrhini</taxon>
        <taxon>Catarrhini</taxon>
        <taxon>Hominidae</taxon>
        <taxon>Pan</taxon>
    </lineage>
</organism>
<reference key="1">
    <citation type="submission" date="2006-08" db="EMBL/GenBank/DDBJ databases">
        <title>Positive selection in transcription factor genes on the human lineage.</title>
        <authorList>
            <person name="Nickel G.C."/>
            <person name="Tefft D.L."/>
            <person name="Trevarthen K."/>
            <person name="Funt J."/>
            <person name="Adams M.D."/>
        </authorList>
    </citation>
    <scope>NUCLEOTIDE SEQUENCE [GENOMIC DNA]</scope>
</reference>
<accession>A1YFY6</accession>
<name>SIM1_PANPA</name>
<comment type="function">
    <text evidence="1">Transcriptional factor that may have pleiotropic effects during embryogenesis and in the adult.</text>
</comment>
<comment type="subunit">
    <text evidence="2">Efficient DNA binding requires dimerization with another bHLH protein. Heterodimer; forms a heterodimer with ARNT, ARNT2 (By similarity).</text>
</comment>
<comment type="subcellular location">
    <subcellularLocation>
        <location evidence="4 5">Nucleus</location>
    </subcellularLocation>
</comment>
<keyword id="KW-0217">Developmental protein</keyword>
<keyword id="KW-0221">Differentiation</keyword>
<keyword id="KW-0238">DNA-binding</keyword>
<keyword id="KW-0524">Neurogenesis</keyword>
<keyword id="KW-0539">Nucleus</keyword>
<keyword id="KW-1185">Reference proteome</keyword>
<keyword id="KW-0677">Repeat</keyword>
<keyword id="KW-0804">Transcription</keyword>
<keyword id="KW-0805">Transcription regulation</keyword>
<sequence>MKEKSKNAARTRREKENSEFYELAKLLPLPSAITSQLDKASIIRLTTSYLKMRVVFPEGLGEAWGHSSWTSPLDNVGRELGSHLLQTLDGFIFVVAPDGKIMYISETASVHLGLSQVELTGNSIYEYIHPADHDEMTAVLTAHQPYHSHFVQEYEIERSFFLRMKCVLAKRNAGLTCGGYKVIHCSGYLKIRQYSLDMSPFDGCYQNVGLVAVGHSLPPSAVTEIKLHSNMFMFRASLDMKLIFLDSRVAELTGYEPQDLIEKTLYHHVHGCDTFHLRCAHHLLLVKGQVTTKYYRFLAKHGGWVWVQSYATIVHNSRSSRPHCIVSVNYVLTDTEYKGLQLSLDQISASKPAFSYTSSSTPTMTDNRKGAKSRLSSSKSKSRTSPYPQYSGFHTERSESDHDSQWGGSPLTDTASPQLLDPADRPGSQHDASCAYRQFSDRSSLCYGFALDHSRLVEERHFHTQACEGGRCEAGRYFLGTPQAGREPWWGSRAALPLTKASPESREAYENSMPHIASVHRIHGRGHWDEDSVVSSPDPGSASESGDRYRTEQYQSSPHEPSKIETLIRATQQMIKEEENRLQLRKAPSDQLASINGAGKKHSLCFANYQQPPPTGEICHGSALANTSPCDHIQQREGKMLSPHENDYDNSPTALSRISSPNSDRISKSSLILAKDYLHSDISSHQTAGDHPTVSPNCFGSHRQYLDKHAYTLTGYALEHLYDSETIRNYSLGCNGSHFDVTSHLRMQPDPAQGHKGTSVIITNGS</sequence>